<comment type="function">
    <text evidence="1">Peptidoglycan polymerase that catalyzes glycan chain elongation from lipid-linked precursors.</text>
</comment>
<comment type="catalytic activity">
    <reaction evidence="1">
        <text>[GlcNAc-(1-&gt;4)-Mur2Ac(oyl-L-Ala-gamma-D-Glu-L-Lys-D-Ala-D-Ala)](n)-di-trans,octa-cis-undecaprenyl diphosphate + beta-D-GlcNAc-(1-&gt;4)-Mur2Ac(oyl-L-Ala-gamma-D-Glu-L-Lys-D-Ala-D-Ala)-di-trans,octa-cis-undecaprenyl diphosphate = [GlcNAc-(1-&gt;4)-Mur2Ac(oyl-L-Ala-gamma-D-Glu-L-Lys-D-Ala-D-Ala)](n+1)-di-trans,octa-cis-undecaprenyl diphosphate + di-trans,octa-cis-undecaprenyl diphosphate + H(+)</text>
        <dbReference type="Rhea" id="RHEA:23708"/>
        <dbReference type="Rhea" id="RHEA-COMP:9602"/>
        <dbReference type="Rhea" id="RHEA-COMP:9603"/>
        <dbReference type="ChEBI" id="CHEBI:15378"/>
        <dbReference type="ChEBI" id="CHEBI:58405"/>
        <dbReference type="ChEBI" id="CHEBI:60033"/>
        <dbReference type="ChEBI" id="CHEBI:78435"/>
        <dbReference type="EC" id="2.4.99.28"/>
    </reaction>
</comment>
<comment type="pathway">
    <text evidence="1">Cell wall biogenesis; peptidoglycan biosynthesis.</text>
</comment>
<comment type="subcellular location">
    <subcellularLocation>
        <location evidence="1">Cell inner membrane</location>
        <topology evidence="1">Single-pass membrane protein</topology>
    </subcellularLocation>
</comment>
<comment type="similarity">
    <text evidence="1">Belongs to the glycosyltransferase 51 family.</text>
</comment>
<reference key="1">
    <citation type="journal article" date="2001" name="Proc. Natl. Acad. Sci. U.S.A.">
        <title>Complete genome sequence of Caulobacter crescentus.</title>
        <authorList>
            <person name="Nierman W.C."/>
            <person name="Feldblyum T.V."/>
            <person name="Laub M.T."/>
            <person name="Paulsen I.T."/>
            <person name="Nelson K.E."/>
            <person name="Eisen J.A."/>
            <person name="Heidelberg J.F."/>
            <person name="Alley M.R.K."/>
            <person name="Ohta N."/>
            <person name="Maddock J.R."/>
            <person name="Potocka I."/>
            <person name="Nelson W.C."/>
            <person name="Newton A."/>
            <person name="Stephens C."/>
            <person name="Phadke N.D."/>
            <person name="Ely B."/>
            <person name="DeBoy R.T."/>
            <person name="Dodson R.J."/>
            <person name="Durkin A.S."/>
            <person name="Gwinn M.L."/>
            <person name="Haft D.H."/>
            <person name="Kolonay J.F."/>
            <person name="Smit J."/>
            <person name="Craven M.B."/>
            <person name="Khouri H.M."/>
            <person name="Shetty J."/>
            <person name="Berry K.J."/>
            <person name="Utterback T.R."/>
            <person name="Tran K."/>
            <person name="Wolf A.M."/>
            <person name="Vamathevan J.J."/>
            <person name="Ermolaeva M.D."/>
            <person name="White O."/>
            <person name="Salzberg S.L."/>
            <person name="Venter J.C."/>
            <person name="Shapiro L."/>
            <person name="Fraser C.M."/>
        </authorList>
    </citation>
    <scope>NUCLEOTIDE SEQUENCE [LARGE SCALE GENOMIC DNA]</scope>
    <source>
        <strain>ATCC 19089 / CIP 103742 / CB 15</strain>
    </source>
</reference>
<feature type="chain" id="PRO_0000083123" description="Biosynthetic peptidoglycan transglycosylase">
    <location>
        <begin position="1"/>
        <end position="229"/>
    </location>
</feature>
<feature type="transmembrane region" description="Helical" evidence="1">
    <location>
        <begin position="11"/>
        <end position="31"/>
    </location>
</feature>
<proteinExistence type="inferred from homology"/>
<sequence length="229" mass="25577">MGRFVRRLLRNLLLALFLVLVAGPVVAVILYRFIPPPVTPLMVIRAVEGRGLDHRWRPMDKISPALPRVLIAAEDAKFCEHRGFDFEALQKAYENNESGRKIRGGSTISQQTAKNVFLWPGRSYVRKGLEAWFTVLIETFWGKKRIMEVYMNSIEYGSGIYGAEAAAQRYFGVSAAKLTQAQSARLAAILPSPLKWKVIKPGKYVAKRTKKIGKATGAVRRDGLADCVA</sequence>
<accession>Q9ABA6</accession>
<organism>
    <name type="scientific">Caulobacter vibrioides (strain ATCC 19089 / CIP 103742 / CB 15)</name>
    <name type="common">Caulobacter crescentus</name>
    <dbReference type="NCBI Taxonomy" id="190650"/>
    <lineage>
        <taxon>Bacteria</taxon>
        <taxon>Pseudomonadati</taxon>
        <taxon>Pseudomonadota</taxon>
        <taxon>Alphaproteobacteria</taxon>
        <taxon>Caulobacterales</taxon>
        <taxon>Caulobacteraceae</taxon>
        <taxon>Caulobacter</taxon>
    </lineage>
</organism>
<name>MTGA_CAUVC</name>
<dbReference type="EC" id="2.4.99.28" evidence="1"/>
<dbReference type="EMBL" id="AE005673">
    <property type="protein sequence ID" value="AAK22312.1"/>
    <property type="molecule type" value="Genomic_DNA"/>
</dbReference>
<dbReference type="PIR" id="D87289">
    <property type="entry name" value="D87289"/>
</dbReference>
<dbReference type="RefSeq" id="NP_419144.1">
    <property type="nucleotide sequence ID" value="NC_002696.2"/>
</dbReference>
<dbReference type="RefSeq" id="WP_010918214.1">
    <property type="nucleotide sequence ID" value="NC_002696.2"/>
</dbReference>
<dbReference type="SMR" id="Q9ABA6"/>
<dbReference type="STRING" id="190650.CC_0325"/>
<dbReference type="CAZy" id="GT51">
    <property type="family name" value="Glycosyltransferase Family 51"/>
</dbReference>
<dbReference type="EnsemblBacteria" id="AAK22312">
    <property type="protein sequence ID" value="AAK22312"/>
    <property type="gene ID" value="CC_0325"/>
</dbReference>
<dbReference type="KEGG" id="ccr:CC_0325"/>
<dbReference type="PATRIC" id="fig|190650.5.peg.325"/>
<dbReference type="eggNOG" id="COG0744">
    <property type="taxonomic scope" value="Bacteria"/>
</dbReference>
<dbReference type="HOGENOM" id="CLU_006354_1_1_5"/>
<dbReference type="BioCyc" id="CAULO:CC0325-MONOMER"/>
<dbReference type="UniPathway" id="UPA00219"/>
<dbReference type="Proteomes" id="UP000001816">
    <property type="component" value="Chromosome"/>
</dbReference>
<dbReference type="GO" id="GO:0009274">
    <property type="term" value="C:peptidoglycan-based cell wall"/>
    <property type="evidence" value="ECO:0007669"/>
    <property type="project" value="InterPro"/>
</dbReference>
<dbReference type="GO" id="GO:0005886">
    <property type="term" value="C:plasma membrane"/>
    <property type="evidence" value="ECO:0007669"/>
    <property type="project" value="UniProtKB-SubCell"/>
</dbReference>
<dbReference type="GO" id="GO:0016763">
    <property type="term" value="F:pentosyltransferase activity"/>
    <property type="evidence" value="ECO:0007669"/>
    <property type="project" value="InterPro"/>
</dbReference>
<dbReference type="GO" id="GO:0008955">
    <property type="term" value="F:peptidoglycan glycosyltransferase activity"/>
    <property type="evidence" value="ECO:0007669"/>
    <property type="project" value="UniProtKB-UniRule"/>
</dbReference>
<dbReference type="GO" id="GO:0071555">
    <property type="term" value="P:cell wall organization"/>
    <property type="evidence" value="ECO:0007669"/>
    <property type="project" value="UniProtKB-KW"/>
</dbReference>
<dbReference type="GO" id="GO:0009252">
    <property type="term" value="P:peptidoglycan biosynthetic process"/>
    <property type="evidence" value="ECO:0007669"/>
    <property type="project" value="UniProtKB-UniRule"/>
</dbReference>
<dbReference type="GO" id="GO:0008360">
    <property type="term" value="P:regulation of cell shape"/>
    <property type="evidence" value="ECO:0007669"/>
    <property type="project" value="UniProtKB-KW"/>
</dbReference>
<dbReference type="Gene3D" id="1.10.3810.10">
    <property type="entry name" value="Biosynthetic peptidoglycan transglycosylase-like"/>
    <property type="match status" value="1"/>
</dbReference>
<dbReference type="HAMAP" id="MF_00766">
    <property type="entry name" value="PGT_MtgA"/>
    <property type="match status" value="1"/>
</dbReference>
<dbReference type="InterPro" id="IPR001264">
    <property type="entry name" value="Glyco_trans_51"/>
</dbReference>
<dbReference type="InterPro" id="IPR023346">
    <property type="entry name" value="Lysozyme-like_dom_sf"/>
</dbReference>
<dbReference type="InterPro" id="IPR036950">
    <property type="entry name" value="PBP_transglycosylase"/>
</dbReference>
<dbReference type="InterPro" id="IPR011812">
    <property type="entry name" value="Pep_trsgly"/>
</dbReference>
<dbReference type="NCBIfam" id="TIGR02070">
    <property type="entry name" value="mono_pep_trsgly"/>
    <property type="match status" value="1"/>
</dbReference>
<dbReference type="PANTHER" id="PTHR30400:SF0">
    <property type="entry name" value="BIOSYNTHETIC PEPTIDOGLYCAN TRANSGLYCOSYLASE"/>
    <property type="match status" value="1"/>
</dbReference>
<dbReference type="PANTHER" id="PTHR30400">
    <property type="entry name" value="MONOFUNCTIONAL BIOSYNTHETIC PEPTIDOGLYCAN TRANSGLYCOSYLASE"/>
    <property type="match status" value="1"/>
</dbReference>
<dbReference type="Pfam" id="PF00912">
    <property type="entry name" value="Transgly"/>
    <property type="match status" value="1"/>
</dbReference>
<dbReference type="SUPFAM" id="SSF53955">
    <property type="entry name" value="Lysozyme-like"/>
    <property type="match status" value="1"/>
</dbReference>
<keyword id="KW-0997">Cell inner membrane</keyword>
<keyword id="KW-1003">Cell membrane</keyword>
<keyword id="KW-0133">Cell shape</keyword>
<keyword id="KW-0961">Cell wall biogenesis/degradation</keyword>
<keyword id="KW-0328">Glycosyltransferase</keyword>
<keyword id="KW-0472">Membrane</keyword>
<keyword id="KW-0573">Peptidoglycan synthesis</keyword>
<keyword id="KW-1185">Reference proteome</keyword>
<keyword id="KW-0808">Transferase</keyword>
<keyword id="KW-0812">Transmembrane</keyword>
<keyword id="KW-1133">Transmembrane helix</keyword>
<gene>
    <name evidence="1" type="primary">mtgA</name>
    <name type="ordered locus">CC_0325</name>
</gene>
<protein>
    <recommendedName>
        <fullName evidence="1">Biosynthetic peptidoglycan transglycosylase</fullName>
        <ecNumber evidence="1">2.4.99.28</ecNumber>
    </recommendedName>
    <alternativeName>
        <fullName evidence="1">Glycan polymerase</fullName>
    </alternativeName>
    <alternativeName>
        <fullName evidence="1">Peptidoglycan glycosyltransferase MtgA</fullName>
        <shortName evidence="1">PGT</shortName>
    </alternativeName>
</protein>
<evidence type="ECO:0000255" key="1">
    <source>
        <dbReference type="HAMAP-Rule" id="MF_00766"/>
    </source>
</evidence>